<dbReference type="EMBL" id="CP017623">
    <property type="protein sequence ID" value="AOW26857.1"/>
    <property type="molecule type" value="Genomic_DNA"/>
</dbReference>
<dbReference type="RefSeq" id="XP_019330710.1">
    <property type="nucleotide sequence ID" value="XM_019475165.1"/>
</dbReference>
<dbReference type="PDB" id="7PZY">
    <property type="method" value="EM"/>
    <property type="resolution" value="2.32 A"/>
    <property type="chains" value="AA=1-136"/>
</dbReference>
<dbReference type="PDB" id="7Q08">
    <property type="method" value="EM"/>
    <property type="resolution" value="2.56 A"/>
    <property type="chains" value="AA=1-136"/>
</dbReference>
<dbReference type="PDB" id="7Q0F">
    <property type="method" value="EM"/>
    <property type="resolution" value="2.64 A"/>
    <property type="chains" value="AA=1-136"/>
</dbReference>
<dbReference type="PDB" id="7Q0P">
    <property type="method" value="EM"/>
    <property type="resolution" value="2.77 A"/>
    <property type="chains" value="AA=1-136"/>
</dbReference>
<dbReference type="PDB" id="7Q0R">
    <property type="method" value="EM"/>
    <property type="resolution" value="2.67 A"/>
    <property type="chains" value="AA=1-136"/>
</dbReference>
<dbReference type="PDBsum" id="7PZY"/>
<dbReference type="PDBsum" id="7Q08"/>
<dbReference type="PDBsum" id="7Q0F"/>
<dbReference type="PDBsum" id="7Q0P"/>
<dbReference type="PDBsum" id="7Q0R"/>
<dbReference type="EMDB" id="EMD-13737"/>
<dbReference type="EMDB" id="EMD-13741"/>
<dbReference type="EMDB" id="EMD-13744"/>
<dbReference type="EMDB" id="EMD-13749"/>
<dbReference type="EMDB" id="EMD-13750"/>
<dbReference type="SMR" id="A0A1D8PFG4"/>
<dbReference type="FunCoup" id="A0A1D8PFG4">
    <property type="interactions" value="1173"/>
</dbReference>
<dbReference type="STRING" id="237561.A0A1D8PFG4"/>
<dbReference type="EnsemblFungi" id="C1_12390C_A-T">
    <property type="protein sequence ID" value="C1_12390C_A-T-p1"/>
    <property type="gene ID" value="C1_12390C_A"/>
</dbReference>
<dbReference type="GeneID" id="30515062"/>
<dbReference type="KEGG" id="cal:CAALFM_C112390CA"/>
<dbReference type="CGD" id="CAL0000176884">
    <property type="gene designation" value="RPL27A"/>
</dbReference>
<dbReference type="VEuPathDB" id="FungiDB:C1_12390C_A"/>
<dbReference type="eggNOG" id="KOG3418">
    <property type="taxonomic scope" value="Eukaryota"/>
</dbReference>
<dbReference type="InParanoid" id="A0A1D8PFG4"/>
<dbReference type="OMA" id="NQWFFTK"/>
<dbReference type="OrthoDB" id="2365484at2759"/>
<dbReference type="Proteomes" id="UP000000559">
    <property type="component" value="Chromosome 1"/>
</dbReference>
<dbReference type="GO" id="GO:0022625">
    <property type="term" value="C:cytosolic large ribosomal subunit"/>
    <property type="evidence" value="ECO:0000318"/>
    <property type="project" value="GO_Central"/>
</dbReference>
<dbReference type="GO" id="GO:0032040">
    <property type="term" value="C:small-subunit processome"/>
    <property type="evidence" value="ECO:0000314"/>
    <property type="project" value="CGD"/>
</dbReference>
<dbReference type="GO" id="GO:0003735">
    <property type="term" value="F:structural constituent of ribosome"/>
    <property type="evidence" value="ECO:0000318"/>
    <property type="project" value="GO_Central"/>
</dbReference>
<dbReference type="GO" id="GO:0006412">
    <property type="term" value="P:translation"/>
    <property type="evidence" value="ECO:0007669"/>
    <property type="project" value="InterPro"/>
</dbReference>
<dbReference type="CDD" id="cd06090">
    <property type="entry name" value="KOW_RPL27"/>
    <property type="match status" value="1"/>
</dbReference>
<dbReference type="FunFam" id="2.30.30.770:FF:000001">
    <property type="entry name" value="60S ribosomal protein L27"/>
    <property type="match status" value="1"/>
</dbReference>
<dbReference type="Gene3D" id="2.30.30.770">
    <property type="match status" value="1"/>
</dbReference>
<dbReference type="InterPro" id="IPR001141">
    <property type="entry name" value="Ribosomal_eL27"/>
</dbReference>
<dbReference type="InterPro" id="IPR018262">
    <property type="entry name" value="Ribosomal_eL27_CS"/>
</dbReference>
<dbReference type="InterPro" id="IPR041991">
    <property type="entry name" value="Ribosomal_eL27_KOW"/>
</dbReference>
<dbReference type="InterPro" id="IPR038655">
    <property type="entry name" value="Ribosomal_eL27_sf"/>
</dbReference>
<dbReference type="InterPro" id="IPR008991">
    <property type="entry name" value="Translation_prot_SH3-like_sf"/>
</dbReference>
<dbReference type="PANTHER" id="PTHR10497">
    <property type="entry name" value="60S RIBOSOMAL PROTEIN L27"/>
    <property type="match status" value="1"/>
</dbReference>
<dbReference type="Pfam" id="PF01777">
    <property type="entry name" value="Ribosomal_L27e"/>
    <property type="match status" value="1"/>
</dbReference>
<dbReference type="SUPFAM" id="SSF50104">
    <property type="entry name" value="Translation proteins SH3-like domain"/>
    <property type="match status" value="1"/>
</dbReference>
<dbReference type="PROSITE" id="PS01107">
    <property type="entry name" value="RIBOSOMAL_L27E"/>
    <property type="match status" value="1"/>
</dbReference>
<evidence type="ECO:0000269" key="1">
    <source>
    </source>
</evidence>
<evidence type="ECO:0000303" key="2">
    <source>
    </source>
</evidence>
<evidence type="ECO:0000305" key="3"/>
<evidence type="ECO:0000305" key="4">
    <source>
    </source>
</evidence>
<evidence type="ECO:0007744" key="5">
    <source>
        <dbReference type="PDB" id="7PZY"/>
    </source>
</evidence>
<evidence type="ECO:0007744" key="6">
    <source>
        <dbReference type="PDB" id="7Q0F"/>
    </source>
</evidence>
<evidence type="ECO:0007744" key="7">
    <source>
        <dbReference type="PDB" id="7Q0P"/>
    </source>
</evidence>
<name>RL27A_CANAL</name>
<comment type="function">
    <text evidence="4">Component of the ribosome, a large ribonucleoprotein complex responsible for the synthesis of proteins in the cell. The small ribosomal subunit (SSU) binds messenger RNAs (mRNAs) and translates the encoded message by selecting cognate aminoacyl-transfer RNA (tRNA) molecules. The large subunit (LSU) contains the ribosomal catalytic site termed the peptidyl transferase center (PTC), which catalyzes the formation of peptide bonds, thereby polymerizing the amino acids delivered by tRNAs into a polypeptide chain. The nascent polypeptides leave the ribosome through a tunnel in the LSU and interact with protein factors that function in enzymatic processing, targeting, and the membrane insertion of nascent chains at the exit of the ribosomal tunnel.</text>
</comment>
<comment type="subunit">
    <text evidence="1">Component of the large ribosomal subunit (PubMed:35613268). Mature ribosomes consist of a small (40S) and a large (60S) subunit (PubMed:35613268). The 40S subunit contains about 32 different proteins and 1 molecule of RNA (18S) (PubMed:35613268). The 60S subunit contains 45 different proteins and 3 molecules of RNA (25S, 5.8S and 5S) (PubMed:35613268).</text>
</comment>
<comment type="subcellular location">
    <subcellularLocation>
        <location evidence="4">Cytoplasm</location>
    </subcellularLocation>
</comment>
<comment type="similarity">
    <text evidence="3">Belongs to the eukaryotic ribosomal protein eL27 family.</text>
</comment>
<gene>
    <name evidence="2" type="primary">RPL27A</name>
    <name type="ORF">CAALFM_C112390CA</name>
</gene>
<organism>
    <name type="scientific">Candida albicans (strain SC5314 / ATCC MYA-2876)</name>
    <name type="common">Yeast</name>
    <dbReference type="NCBI Taxonomy" id="237561"/>
    <lineage>
        <taxon>Eukaryota</taxon>
        <taxon>Fungi</taxon>
        <taxon>Dikarya</taxon>
        <taxon>Ascomycota</taxon>
        <taxon>Saccharomycotina</taxon>
        <taxon>Pichiomycetes</taxon>
        <taxon>Debaryomycetaceae</taxon>
        <taxon>Candida/Lodderomyces clade</taxon>
        <taxon>Candida</taxon>
    </lineage>
</organism>
<feature type="chain" id="PRO_0000456503" description="Large ribosomal subunit protein eL27">
    <location>
        <begin position="1"/>
        <end position="136"/>
    </location>
</feature>
<keyword id="KW-0002">3D-structure</keyword>
<keyword id="KW-0963">Cytoplasm</keyword>
<keyword id="KW-1185">Reference proteome</keyword>
<keyword id="KW-0687">Ribonucleoprotein</keyword>
<keyword id="KW-0689">Ribosomal protein</keyword>
<protein>
    <recommendedName>
        <fullName evidence="2">Large ribosomal subunit protein eL27</fullName>
    </recommendedName>
    <alternativeName>
        <fullName>60S ribosomal protein L27-A</fullName>
    </alternativeName>
</protein>
<proteinExistence type="evidence at protein level"/>
<sequence>MAKFIKSGKVAIVVRGRYAGKKVVIVKPHDEGTKSHPFPHAIVAGIERAPLKVTKKMDAKKVTKRTKVKPFVKLVNYNHLMPTRYSLDVESFKSAVTSEALEEPSQREEAKKVVKKAFEEKHQAGKNKWFFQKLHF</sequence>
<reference key="1">
    <citation type="journal article" date="2004" name="Proc. Natl. Acad. Sci. U.S.A.">
        <title>The diploid genome sequence of Candida albicans.</title>
        <authorList>
            <person name="Jones T."/>
            <person name="Federspiel N.A."/>
            <person name="Chibana H."/>
            <person name="Dungan J."/>
            <person name="Kalman S."/>
            <person name="Magee B.B."/>
            <person name="Newport G."/>
            <person name="Thorstenson Y.R."/>
            <person name="Agabian N."/>
            <person name="Magee P.T."/>
            <person name="Davis R.W."/>
            <person name="Scherer S."/>
        </authorList>
    </citation>
    <scope>NUCLEOTIDE SEQUENCE [LARGE SCALE GENOMIC DNA]</scope>
    <source>
        <strain>SC5314 / ATCC MYA-2876</strain>
    </source>
</reference>
<reference key="2">
    <citation type="journal article" date="2007" name="Genome Biol.">
        <title>Assembly of the Candida albicans genome into sixteen supercontigs aligned on the eight chromosomes.</title>
        <authorList>
            <person name="van het Hoog M."/>
            <person name="Rast T.J."/>
            <person name="Martchenko M."/>
            <person name="Grindle S."/>
            <person name="Dignard D."/>
            <person name="Hogues H."/>
            <person name="Cuomo C."/>
            <person name="Berriman M."/>
            <person name="Scherer S."/>
            <person name="Magee B.B."/>
            <person name="Whiteway M."/>
            <person name="Chibana H."/>
            <person name="Nantel A."/>
            <person name="Magee P.T."/>
        </authorList>
    </citation>
    <scope>GENOME REANNOTATION</scope>
    <source>
        <strain>SC5314 / ATCC MYA-2876</strain>
    </source>
</reference>
<reference key="3">
    <citation type="journal article" date="2013" name="Genome Biol.">
        <title>Assembly of a phased diploid Candida albicans genome facilitates allele-specific measurements and provides a simple model for repeat and indel structure.</title>
        <authorList>
            <person name="Muzzey D."/>
            <person name="Schwartz K."/>
            <person name="Weissman J.S."/>
            <person name="Sherlock G."/>
        </authorList>
    </citation>
    <scope>NUCLEOTIDE SEQUENCE [LARGE SCALE GENOMIC DNA]</scope>
    <scope>GENOME REANNOTATION</scope>
    <source>
        <strain>SC5314 / ATCC MYA-2876</strain>
    </source>
</reference>
<reference evidence="5 6 7" key="4">
    <citation type="journal article" date="2022" name="Sci. Adv.">
        <title>E-site drug specificity of the human pathogen Candida albicans ribosome.</title>
        <authorList>
            <person name="Zgadzay Y."/>
            <person name="Kolosova O."/>
            <person name="Stetsenko A."/>
            <person name="Wu C."/>
            <person name="Bruchlen D."/>
            <person name="Usachev K."/>
            <person name="Validov S."/>
            <person name="Jenner L."/>
            <person name="Rogachev A."/>
            <person name="Yusupova G."/>
            <person name="Sachs M.S."/>
            <person name="Guskov A."/>
            <person name="Yusupov M."/>
        </authorList>
    </citation>
    <scope>STRUCTURE BY ELECTRON MICROSCOPY (2.32 ANGSTROMS) OF THE 80S RIBOSOME</scope>
    <scope>SUBUNIT</scope>
</reference>
<accession>A0A1D8PFG4</accession>